<gene>
    <name evidence="1" type="primary">rlmE</name>
    <name evidence="1" type="synonym">ftsJ</name>
    <name evidence="1" type="synonym">rrmJ</name>
    <name type="ordered locus">ECED1_3837</name>
</gene>
<proteinExistence type="inferred from homology"/>
<comment type="function">
    <text evidence="1">Specifically methylates the uridine in position 2552 of 23S rRNA at the 2'-O position of the ribose in the fully assembled 50S ribosomal subunit.</text>
</comment>
<comment type="catalytic activity">
    <reaction evidence="1">
        <text>uridine(2552) in 23S rRNA + S-adenosyl-L-methionine = 2'-O-methyluridine(2552) in 23S rRNA + S-adenosyl-L-homocysteine + H(+)</text>
        <dbReference type="Rhea" id="RHEA:42720"/>
        <dbReference type="Rhea" id="RHEA-COMP:10202"/>
        <dbReference type="Rhea" id="RHEA-COMP:10203"/>
        <dbReference type="ChEBI" id="CHEBI:15378"/>
        <dbReference type="ChEBI" id="CHEBI:57856"/>
        <dbReference type="ChEBI" id="CHEBI:59789"/>
        <dbReference type="ChEBI" id="CHEBI:65315"/>
        <dbReference type="ChEBI" id="CHEBI:74478"/>
        <dbReference type="EC" id="2.1.1.166"/>
    </reaction>
</comment>
<comment type="subcellular location">
    <subcellularLocation>
        <location evidence="1">Cytoplasm</location>
    </subcellularLocation>
</comment>
<comment type="similarity">
    <text evidence="1">Belongs to the class I-like SAM-binding methyltransferase superfamily. RNA methyltransferase RlmE family.</text>
</comment>
<name>RLME_ECO81</name>
<keyword id="KW-0963">Cytoplasm</keyword>
<keyword id="KW-0489">Methyltransferase</keyword>
<keyword id="KW-0698">rRNA processing</keyword>
<keyword id="KW-0949">S-adenosyl-L-methionine</keyword>
<keyword id="KW-0808">Transferase</keyword>
<accession>B7N363</accession>
<protein>
    <recommendedName>
        <fullName evidence="1">Ribosomal RNA large subunit methyltransferase E</fullName>
        <ecNumber evidence="1">2.1.1.166</ecNumber>
    </recommendedName>
    <alternativeName>
        <fullName evidence="1">23S rRNA Um2552 methyltransferase</fullName>
    </alternativeName>
    <alternativeName>
        <fullName evidence="1">rRNA (uridine-2'-O-)-methyltransferase</fullName>
    </alternativeName>
</protein>
<feature type="chain" id="PRO_1000185296" description="Ribosomal RNA large subunit methyltransferase E">
    <location>
        <begin position="1"/>
        <end position="209"/>
    </location>
</feature>
<feature type="active site" description="Proton acceptor" evidence="1">
    <location>
        <position position="164"/>
    </location>
</feature>
<feature type="binding site" evidence="1">
    <location>
        <position position="63"/>
    </location>
    <ligand>
        <name>S-adenosyl-L-methionine</name>
        <dbReference type="ChEBI" id="CHEBI:59789"/>
    </ligand>
</feature>
<feature type="binding site" evidence="1">
    <location>
        <position position="65"/>
    </location>
    <ligand>
        <name>S-adenosyl-L-methionine</name>
        <dbReference type="ChEBI" id="CHEBI:59789"/>
    </ligand>
</feature>
<feature type="binding site" evidence="1">
    <location>
        <position position="83"/>
    </location>
    <ligand>
        <name>S-adenosyl-L-methionine</name>
        <dbReference type="ChEBI" id="CHEBI:59789"/>
    </ligand>
</feature>
<feature type="binding site" evidence="1">
    <location>
        <position position="99"/>
    </location>
    <ligand>
        <name>S-adenosyl-L-methionine</name>
        <dbReference type="ChEBI" id="CHEBI:59789"/>
    </ligand>
</feature>
<feature type="binding site" evidence="1">
    <location>
        <position position="124"/>
    </location>
    <ligand>
        <name>S-adenosyl-L-methionine</name>
        <dbReference type="ChEBI" id="CHEBI:59789"/>
    </ligand>
</feature>
<sequence>MTGKKRSASSSRWLQEHFSDKYVQQAQKKGLRSRAWFKLDEIQQSDKLFKPGMTVVDLGAAPGGWSQYVVTQIGGKGRIIACDLLPMDPIVGVDFLQGDFRDELVMKALLERVGDSKVQVVMSDMAPNMSGTPAVDIPRAMYLVELALEMCRDVLAPGGSFVVKVFQGEGFDEYLREIRSLFTKVKVRKPDSSRARSREVYIVATGRKP</sequence>
<dbReference type="EC" id="2.1.1.166" evidence="1"/>
<dbReference type="EMBL" id="CU928162">
    <property type="protein sequence ID" value="CAV17954.1"/>
    <property type="molecule type" value="Genomic_DNA"/>
</dbReference>
<dbReference type="RefSeq" id="WP_000145975.1">
    <property type="nucleotide sequence ID" value="NC_011745.1"/>
</dbReference>
<dbReference type="SMR" id="B7N363"/>
<dbReference type="GeneID" id="93778802"/>
<dbReference type="KEGG" id="ecq:ECED1_3837"/>
<dbReference type="HOGENOM" id="CLU_009422_4_0_6"/>
<dbReference type="Proteomes" id="UP000000748">
    <property type="component" value="Chromosome"/>
</dbReference>
<dbReference type="GO" id="GO:0005737">
    <property type="term" value="C:cytoplasm"/>
    <property type="evidence" value="ECO:0007669"/>
    <property type="project" value="UniProtKB-SubCell"/>
</dbReference>
<dbReference type="GO" id="GO:0008650">
    <property type="term" value="F:rRNA (uridine-2'-O-)-methyltransferase activity"/>
    <property type="evidence" value="ECO:0007669"/>
    <property type="project" value="UniProtKB-UniRule"/>
</dbReference>
<dbReference type="CDD" id="cd02440">
    <property type="entry name" value="AdoMet_MTases"/>
    <property type="match status" value="1"/>
</dbReference>
<dbReference type="FunFam" id="3.40.50.150:FF:000005">
    <property type="entry name" value="Ribosomal RNA large subunit methyltransferase E"/>
    <property type="match status" value="1"/>
</dbReference>
<dbReference type="Gene3D" id="3.40.50.150">
    <property type="entry name" value="Vaccinia Virus protein VP39"/>
    <property type="match status" value="1"/>
</dbReference>
<dbReference type="HAMAP" id="MF_01547">
    <property type="entry name" value="RNA_methyltr_E"/>
    <property type="match status" value="1"/>
</dbReference>
<dbReference type="InterPro" id="IPR050082">
    <property type="entry name" value="RNA_methyltr_RlmE"/>
</dbReference>
<dbReference type="InterPro" id="IPR002877">
    <property type="entry name" value="RNA_MeTrfase_FtsJ_dom"/>
</dbReference>
<dbReference type="InterPro" id="IPR015507">
    <property type="entry name" value="rRNA-MeTfrase_E"/>
</dbReference>
<dbReference type="InterPro" id="IPR004512">
    <property type="entry name" value="rRNA_MeTrfase_gammaproteobac"/>
</dbReference>
<dbReference type="InterPro" id="IPR029063">
    <property type="entry name" value="SAM-dependent_MTases_sf"/>
</dbReference>
<dbReference type="NCBIfam" id="NF008390">
    <property type="entry name" value="PRK11188.1"/>
    <property type="match status" value="1"/>
</dbReference>
<dbReference type="NCBIfam" id="TIGR00438">
    <property type="entry name" value="rrmJ"/>
    <property type="match status" value="1"/>
</dbReference>
<dbReference type="PANTHER" id="PTHR10920">
    <property type="entry name" value="RIBOSOMAL RNA METHYLTRANSFERASE"/>
    <property type="match status" value="1"/>
</dbReference>
<dbReference type="PANTHER" id="PTHR10920:SF18">
    <property type="entry name" value="RRNA METHYLTRANSFERASE 2, MITOCHONDRIAL"/>
    <property type="match status" value="1"/>
</dbReference>
<dbReference type="Pfam" id="PF01728">
    <property type="entry name" value="FtsJ"/>
    <property type="match status" value="1"/>
</dbReference>
<dbReference type="PIRSF" id="PIRSF005461">
    <property type="entry name" value="23S_rRNA_mtase"/>
    <property type="match status" value="1"/>
</dbReference>
<dbReference type="SUPFAM" id="SSF53335">
    <property type="entry name" value="S-adenosyl-L-methionine-dependent methyltransferases"/>
    <property type="match status" value="1"/>
</dbReference>
<organism>
    <name type="scientific">Escherichia coli O81 (strain ED1a)</name>
    <dbReference type="NCBI Taxonomy" id="585397"/>
    <lineage>
        <taxon>Bacteria</taxon>
        <taxon>Pseudomonadati</taxon>
        <taxon>Pseudomonadota</taxon>
        <taxon>Gammaproteobacteria</taxon>
        <taxon>Enterobacterales</taxon>
        <taxon>Enterobacteriaceae</taxon>
        <taxon>Escherichia</taxon>
    </lineage>
</organism>
<evidence type="ECO:0000255" key="1">
    <source>
        <dbReference type="HAMAP-Rule" id="MF_01547"/>
    </source>
</evidence>
<reference key="1">
    <citation type="journal article" date="2009" name="PLoS Genet.">
        <title>Organised genome dynamics in the Escherichia coli species results in highly diverse adaptive paths.</title>
        <authorList>
            <person name="Touchon M."/>
            <person name="Hoede C."/>
            <person name="Tenaillon O."/>
            <person name="Barbe V."/>
            <person name="Baeriswyl S."/>
            <person name="Bidet P."/>
            <person name="Bingen E."/>
            <person name="Bonacorsi S."/>
            <person name="Bouchier C."/>
            <person name="Bouvet O."/>
            <person name="Calteau A."/>
            <person name="Chiapello H."/>
            <person name="Clermont O."/>
            <person name="Cruveiller S."/>
            <person name="Danchin A."/>
            <person name="Diard M."/>
            <person name="Dossat C."/>
            <person name="Karoui M.E."/>
            <person name="Frapy E."/>
            <person name="Garry L."/>
            <person name="Ghigo J.M."/>
            <person name="Gilles A.M."/>
            <person name="Johnson J."/>
            <person name="Le Bouguenec C."/>
            <person name="Lescat M."/>
            <person name="Mangenot S."/>
            <person name="Martinez-Jehanne V."/>
            <person name="Matic I."/>
            <person name="Nassif X."/>
            <person name="Oztas S."/>
            <person name="Petit M.A."/>
            <person name="Pichon C."/>
            <person name="Rouy Z."/>
            <person name="Ruf C.S."/>
            <person name="Schneider D."/>
            <person name="Tourret J."/>
            <person name="Vacherie B."/>
            <person name="Vallenet D."/>
            <person name="Medigue C."/>
            <person name="Rocha E.P.C."/>
            <person name="Denamur E."/>
        </authorList>
    </citation>
    <scope>NUCLEOTIDE SEQUENCE [LARGE SCALE GENOMIC DNA]</scope>
    <source>
        <strain>ED1a</strain>
    </source>
</reference>